<dbReference type="EC" id="5.6.2.2" evidence="1"/>
<dbReference type="EMBL" id="BA000017">
    <property type="protein sequence ID" value="BAB57517.1"/>
    <property type="molecule type" value="Genomic_DNA"/>
</dbReference>
<dbReference type="RefSeq" id="WP_001289546.1">
    <property type="nucleotide sequence ID" value="NC_002758.2"/>
</dbReference>
<dbReference type="SMR" id="Q931S2"/>
<dbReference type="BindingDB" id="Q931S2"/>
<dbReference type="ChEMBL" id="CHEMBL4836"/>
<dbReference type="KEGG" id="sav:SAV1355"/>
<dbReference type="HOGENOM" id="CLU_002977_4_1_9"/>
<dbReference type="PhylomeDB" id="Q931S2"/>
<dbReference type="Proteomes" id="UP000002481">
    <property type="component" value="Chromosome"/>
</dbReference>
<dbReference type="GO" id="GO:0005694">
    <property type="term" value="C:chromosome"/>
    <property type="evidence" value="ECO:0007669"/>
    <property type="project" value="InterPro"/>
</dbReference>
<dbReference type="GO" id="GO:0005737">
    <property type="term" value="C:cytoplasm"/>
    <property type="evidence" value="ECO:0007669"/>
    <property type="project" value="TreeGrafter"/>
</dbReference>
<dbReference type="GO" id="GO:0009330">
    <property type="term" value="C:DNA topoisomerase type II (double strand cut, ATP-hydrolyzing) complex"/>
    <property type="evidence" value="ECO:0007669"/>
    <property type="project" value="TreeGrafter"/>
</dbReference>
<dbReference type="GO" id="GO:0019897">
    <property type="term" value="C:extrinsic component of plasma membrane"/>
    <property type="evidence" value="ECO:0007669"/>
    <property type="project" value="UniProtKB-UniRule"/>
</dbReference>
<dbReference type="GO" id="GO:0005524">
    <property type="term" value="F:ATP binding"/>
    <property type="evidence" value="ECO:0007669"/>
    <property type="project" value="InterPro"/>
</dbReference>
<dbReference type="GO" id="GO:0003677">
    <property type="term" value="F:DNA binding"/>
    <property type="evidence" value="ECO:0007669"/>
    <property type="project" value="UniProtKB-UniRule"/>
</dbReference>
<dbReference type="GO" id="GO:0034335">
    <property type="term" value="F:DNA negative supercoiling activity"/>
    <property type="evidence" value="ECO:0007669"/>
    <property type="project" value="UniProtKB-ARBA"/>
</dbReference>
<dbReference type="GO" id="GO:0007059">
    <property type="term" value="P:chromosome segregation"/>
    <property type="evidence" value="ECO:0007669"/>
    <property type="project" value="UniProtKB-UniRule"/>
</dbReference>
<dbReference type="GO" id="GO:0006265">
    <property type="term" value="P:DNA topological change"/>
    <property type="evidence" value="ECO:0007669"/>
    <property type="project" value="UniProtKB-UniRule"/>
</dbReference>
<dbReference type="CDD" id="cd00187">
    <property type="entry name" value="TOP4c"/>
    <property type="match status" value="1"/>
</dbReference>
<dbReference type="FunFam" id="1.10.268.10:FF:000001">
    <property type="entry name" value="DNA gyrase subunit A"/>
    <property type="match status" value="1"/>
</dbReference>
<dbReference type="FunFam" id="3.30.1360.40:FF:000002">
    <property type="entry name" value="DNA gyrase subunit A"/>
    <property type="match status" value="1"/>
</dbReference>
<dbReference type="FunFam" id="3.90.199.10:FF:000001">
    <property type="entry name" value="DNA gyrase subunit A"/>
    <property type="match status" value="1"/>
</dbReference>
<dbReference type="FunFam" id="2.120.10.90:FF:000005">
    <property type="entry name" value="DNA topoisomerase 4 subunit A"/>
    <property type="match status" value="1"/>
</dbReference>
<dbReference type="Gene3D" id="3.30.1360.40">
    <property type="match status" value="1"/>
</dbReference>
<dbReference type="Gene3D" id="2.120.10.90">
    <property type="entry name" value="DNA gyrase/topoisomerase IV, subunit A, C-terminal"/>
    <property type="match status" value="1"/>
</dbReference>
<dbReference type="Gene3D" id="3.90.199.10">
    <property type="entry name" value="Topoisomerase II, domain 5"/>
    <property type="match status" value="1"/>
</dbReference>
<dbReference type="Gene3D" id="1.10.268.10">
    <property type="entry name" value="Topoisomerase, domain 3"/>
    <property type="match status" value="1"/>
</dbReference>
<dbReference type="HAMAP" id="MF_00937">
    <property type="entry name" value="ParC_type2"/>
    <property type="match status" value="1"/>
</dbReference>
<dbReference type="InterPro" id="IPR006691">
    <property type="entry name" value="GyrA/parC_rep"/>
</dbReference>
<dbReference type="InterPro" id="IPR035516">
    <property type="entry name" value="Gyrase/topoIV_suA_C"/>
</dbReference>
<dbReference type="InterPro" id="IPR013760">
    <property type="entry name" value="Topo_IIA-like_dom_sf"/>
</dbReference>
<dbReference type="InterPro" id="IPR013758">
    <property type="entry name" value="Topo_IIA_A/C_ab"/>
</dbReference>
<dbReference type="InterPro" id="IPR013757">
    <property type="entry name" value="Topo_IIA_A_a_sf"/>
</dbReference>
<dbReference type="InterPro" id="IPR002205">
    <property type="entry name" value="Topo_IIA_dom_A"/>
</dbReference>
<dbReference type="InterPro" id="IPR005741">
    <property type="entry name" value="TopoIV_A_Gpos"/>
</dbReference>
<dbReference type="InterPro" id="IPR050220">
    <property type="entry name" value="Type_II_DNA_Topoisomerases"/>
</dbReference>
<dbReference type="NCBIfam" id="TIGR01061">
    <property type="entry name" value="parC_Gpos"/>
    <property type="match status" value="1"/>
</dbReference>
<dbReference type="NCBIfam" id="NF004044">
    <property type="entry name" value="PRK05561.1"/>
    <property type="match status" value="1"/>
</dbReference>
<dbReference type="PANTHER" id="PTHR43493">
    <property type="entry name" value="DNA GYRASE/TOPOISOMERASE SUBUNIT A"/>
    <property type="match status" value="1"/>
</dbReference>
<dbReference type="PANTHER" id="PTHR43493:SF9">
    <property type="entry name" value="DNA TOPOISOMERASE 4 SUBUNIT A"/>
    <property type="match status" value="1"/>
</dbReference>
<dbReference type="Pfam" id="PF03989">
    <property type="entry name" value="DNA_gyraseA_C"/>
    <property type="match status" value="5"/>
</dbReference>
<dbReference type="Pfam" id="PF00521">
    <property type="entry name" value="DNA_topoisoIV"/>
    <property type="match status" value="1"/>
</dbReference>
<dbReference type="SMART" id="SM00434">
    <property type="entry name" value="TOP4c"/>
    <property type="match status" value="1"/>
</dbReference>
<dbReference type="SUPFAM" id="SSF101904">
    <property type="entry name" value="GyrA/ParC C-terminal domain-like"/>
    <property type="match status" value="1"/>
</dbReference>
<dbReference type="SUPFAM" id="SSF56719">
    <property type="entry name" value="Type II DNA topoisomerase"/>
    <property type="match status" value="1"/>
</dbReference>
<dbReference type="PROSITE" id="PS52040">
    <property type="entry name" value="TOPO_IIA"/>
    <property type="match status" value="1"/>
</dbReference>
<keyword id="KW-1003">Cell membrane</keyword>
<keyword id="KW-0238">DNA-binding</keyword>
<keyword id="KW-0413">Isomerase</keyword>
<keyword id="KW-0472">Membrane</keyword>
<keyword id="KW-0799">Topoisomerase</keyword>
<evidence type="ECO:0000255" key="1">
    <source>
        <dbReference type="HAMAP-Rule" id="MF_00937"/>
    </source>
</evidence>
<evidence type="ECO:0000255" key="2">
    <source>
        <dbReference type="PROSITE-ProRule" id="PRU01384"/>
    </source>
</evidence>
<reference key="1">
    <citation type="journal article" date="2001" name="Lancet">
        <title>Whole genome sequencing of meticillin-resistant Staphylococcus aureus.</title>
        <authorList>
            <person name="Kuroda M."/>
            <person name="Ohta T."/>
            <person name="Uchiyama I."/>
            <person name="Baba T."/>
            <person name="Yuzawa H."/>
            <person name="Kobayashi I."/>
            <person name="Cui L."/>
            <person name="Oguchi A."/>
            <person name="Aoki K."/>
            <person name="Nagai Y."/>
            <person name="Lian J.-Q."/>
            <person name="Ito T."/>
            <person name="Kanamori M."/>
            <person name="Matsumaru H."/>
            <person name="Maruyama A."/>
            <person name="Murakami H."/>
            <person name="Hosoyama A."/>
            <person name="Mizutani-Ui Y."/>
            <person name="Takahashi N.K."/>
            <person name="Sawano T."/>
            <person name="Inoue R."/>
            <person name="Kaito C."/>
            <person name="Sekimizu K."/>
            <person name="Hirakawa H."/>
            <person name="Kuhara S."/>
            <person name="Goto S."/>
            <person name="Yabuzaki J."/>
            <person name="Kanehisa M."/>
            <person name="Yamashita A."/>
            <person name="Oshima K."/>
            <person name="Furuya K."/>
            <person name="Yoshino C."/>
            <person name="Shiba T."/>
            <person name="Hattori M."/>
            <person name="Ogasawara N."/>
            <person name="Hayashi H."/>
            <person name="Hiramatsu K."/>
        </authorList>
    </citation>
    <scope>NUCLEOTIDE SEQUENCE [LARGE SCALE GENOMIC DNA]</scope>
    <source>
        <strain>Mu50 / ATCC 700699</strain>
    </source>
</reference>
<name>PARC_STAAM</name>
<proteinExistence type="inferred from homology"/>
<accession>Q931S2</accession>
<organism>
    <name type="scientific">Staphylococcus aureus (strain Mu50 / ATCC 700699)</name>
    <dbReference type="NCBI Taxonomy" id="158878"/>
    <lineage>
        <taxon>Bacteria</taxon>
        <taxon>Bacillati</taxon>
        <taxon>Bacillota</taxon>
        <taxon>Bacilli</taxon>
        <taxon>Bacillales</taxon>
        <taxon>Staphylococcaceae</taxon>
        <taxon>Staphylococcus</taxon>
    </lineage>
</organism>
<sequence>MSEIIQDLSLEDVLGDRFGRYSKYIIQERALPDVRDGLKPVQRRILYAMYSSGNTHDKNFRKSAKTVGDVIGQYHPHGDFSVYEAMVRLSQDWKLRHVLIEMHGNNGSIDNDPPAAMRYTEAKLSLLAEELLRDINKETVSFIPNYDDTTLEPMVLPSRFPNLLVNGSTGISAGYATDIPPHNLAEVIQATLKYIDNPDITVNQLMKYIKGPDFPTGGIIQGIDGIKKAYESGKGRIIVRSKVEEETLRNGRKQLIITEIPYEVNKSSLVKRIDELRADKKVDGIVEVRDETDRTGLRIAIELKKDVNSESIKNYLYKNSDLQISYNFNMVAISDGRPKLMGIRQIIDSYLNHQIEVVANRTKFELDNAEKRMHIVEGLIKALSILDKVIELIRSSKNKRDAKENLIEVFEFTEEQAEAIVMLQLYRLTNTDIVALEGEHKELEALIKQLRHILDNHDALLNVIKEELNEIKKKFKSERLSLIEAEIEEIKIDKEVMVPSEEVILSMTRHGYIKRTSIRSFNASGVEDIGLKDGDSLLKHQEVNTQDTVLVFTNKGRYLFIPVHKLADIRWKELGQHVSQIVPIEEDEVVINVFNEKDFNTDAFYVFATQNGMIKKSTVPLFKTTRFNKPLIATKVKENDDLISVMRFEKDQLITVITNKGMSLTYNTSELSDTGLRAAGVKSINLKAEDFVVMTEGVSENDTILMATQRGSLKRISFKILQVAKRAQRGITLLKELKKNPHRIVAAHVVTGEHSQYTLYSKSNEEHGLINDIHKSEQYTNGSFIVDTDDFGEVIDMYIS</sequence>
<comment type="function">
    <text evidence="1">Topoisomerase IV is essential for chromosome segregation. It relaxes supercoiled DNA. Performs the decatenation events required during the replication of a circular DNA molecule.</text>
</comment>
<comment type="catalytic activity">
    <reaction evidence="1">
        <text>ATP-dependent breakage, passage and rejoining of double-stranded DNA.</text>
        <dbReference type="EC" id="5.6.2.2"/>
    </reaction>
</comment>
<comment type="subunit">
    <text evidence="1">Heterotetramer composed of ParC and ParE.</text>
</comment>
<comment type="subcellular location">
    <subcellularLocation>
        <location evidence="1">Cell membrane</location>
        <topology evidence="1">Peripheral membrane protein</topology>
    </subcellularLocation>
</comment>
<comment type="similarity">
    <text evidence="1">Belongs to the type II topoisomerase GyrA/ParC subunit family. ParC type 2 subfamily.</text>
</comment>
<gene>
    <name evidence="1" type="primary">parC</name>
    <name type="ordered locus">SAV1355</name>
</gene>
<feature type="chain" id="PRO_0000145410" description="DNA topoisomerase 4 subunit A">
    <location>
        <begin position="1"/>
        <end position="800"/>
    </location>
</feature>
<feature type="domain" description="Topo IIA-type catalytic" evidence="2">
    <location>
        <begin position="31"/>
        <end position="495"/>
    </location>
</feature>
<feature type="active site" description="O-(5'-phospho-DNA)-tyrosine intermediate" evidence="1">
    <location>
        <position position="119"/>
    </location>
</feature>
<feature type="site" description="Interaction with DNA" evidence="1">
    <location>
        <position position="39"/>
    </location>
</feature>
<feature type="site" description="Interaction with DNA" evidence="1">
    <location>
        <position position="75"/>
    </location>
</feature>
<feature type="site" description="Interaction with DNA" evidence="1">
    <location>
        <position position="77"/>
    </location>
</feature>
<feature type="site" description="Interaction with DNA" evidence="1">
    <location>
        <position position="88"/>
    </location>
</feature>
<feature type="site" description="Interaction with DNA" evidence="1">
    <location>
        <position position="94"/>
    </location>
</feature>
<feature type="site" description="Transition state stabilizer" evidence="1">
    <location>
        <position position="118"/>
    </location>
</feature>
<protein>
    <recommendedName>
        <fullName evidence="1">DNA topoisomerase 4 subunit A</fullName>
        <ecNumber evidence="1">5.6.2.2</ecNumber>
    </recommendedName>
    <alternativeName>
        <fullName evidence="1">Topoisomerase IV subunit A</fullName>
    </alternativeName>
</protein>